<proteinExistence type="inferred from homology"/>
<reference key="1">
    <citation type="journal article" date="2006" name="J. Bacteriol.">
        <title>Whole-genome sequence of Listeria welshimeri reveals common steps in genome reduction with Listeria innocua as compared to Listeria monocytogenes.</title>
        <authorList>
            <person name="Hain T."/>
            <person name="Steinweg C."/>
            <person name="Kuenne C.T."/>
            <person name="Billion A."/>
            <person name="Ghai R."/>
            <person name="Chatterjee S.S."/>
            <person name="Domann E."/>
            <person name="Kaerst U."/>
            <person name="Goesmann A."/>
            <person name="Bekel T."/>
            <person name="Bartels D."/>
            <person name="Kaiser O."/>
            <person name="Meyer F."/>
            <person name="Puehler A."/>
            <person name="Weisshaar B."/>
            <person name="Wehland J."/>
            <person name="Liang C."/>
            <person name="Dandekar T."/>
            <person name="Lampidis R."/>
            <person name="Kreft J."/>
            <person name="Goebel W."/>
            <person name="Chakraborty T."/>
        </authorList>
    </citation>
    <scope>NUCLEOTIDE SEQUENCE [LARGE SCALE GENOMIC DNA]</scope>
    <source>
        <strain>ATCC 35897 / DSM 20650 / CCUG 15529 / CIP 8149 / NCTC 11857 / SLCC 5334 / V8</strain>
    </source>
</reference>
<sequence>MENLKQLQERVAVSDGREKADLVIKNGRIVNVFSGEIMEGDIAIKNGYIAGIGDFSEAEQIMDAAGEFIVPGFIDAHVHVESAMVTPAEFARVLLPNGVTTIVTDPHEIANVAGEKGIEFMLEDAKGAPLDMFVMLPSSVPATEGEHNGETLHAKKLHPLYKHEKVIGLAEVMDFPSVAKGSSDILTKIIDAKKEGGRIDGHGAGLTSADLNNYLAVGIRTDHESTNAKEAVDRLRAGMFVMLREGTVGRDLLQTISAVSEKNSHRFCFCTDDKLINDLITEGSINYNIRLAIENNIDPITAIQMATINAANCHNLPYLGAVAAGYQADIVFLKDLQTIEISKVLKNGQVVVENGARNEAAFEKKHSETFISPKIQHHLSKQDLELPLTNDTCYVIGMKQNNLFTEKLMEQVNVENGKFVPSIEKDLLKMAVVERHHNTGCVGVGIVKGFGLKEGAIATTVAHDSHNIVAVGASDEAMEKAINYVTEMGGGIAVVDETGKVLHDLALPVAGLLSNKPYEEVERDLAGLLKAFNQISNAKGFDPFLTLSFLTLPVIPELKLTDQGLFDFATFQIIPNEVN</sequence>
<keyword id="KW-0378">Hydrolase</keyword>
<keyword id="KW-0464">Manganese</keyword>
<organism>
    <name type="scientific">Listeria welshimeri serovar 6b (strain ATCC 35897 / DSM 20650 / CCUG 15529 / CIP 8149 / NCTC 11857 / SLCC 5334 / V8)</name>
    <dbReference type="NCBI Taxonomy" id="386043"/>
    <lineage>
        <taxon>Bacteria</taxon>
        <taxon>Bacillati</taxon>
        <taxon>Bacillota</taxon>
        <taxon>Bacilli</taxon>
        <taxon>Bacillales</taxon>
        <taxon>Listeriaceae</taxon>
        <taxon>Listeria</taxon>
    </lineage>
</organism>
<comment type="catalytic activity">
    <reaction evidence="1">
        <text>adenine + H2O + H(+) = hypoxanthine + NH4(+)</text>
        <dbReference type="Rhea" id="RHEA:23688"/>
        <dbReference type="ChEBI" id="CHEBI:15377"/>
        <dbReference type="ChEBI" id="CHEBI:15378"/>
        <dbReference type="ChEBI" id="CHEBI:16708"/>
        <dbReference type="ChEBI" id="CHEBI:17368"/>
        <dbReference type="ChEBI" id="CHEBI:28938"/>
        <dbReference type="EC" id="3.5.4.2"/>
    </reaction>
</comment>
<comment type="cofactor">
    <cofactor evidence="1">
        <name>Mn(2+)</name>
        <dbReference type="ChEBI" id="CHEBI:29035"/>
    </cofactor>
</comment>
<comment type="similarity">
    <text evidence="1">Belongs to the metallo-dependent hydrolases superfamily. Adenine deaminase family.</text>
</comment>
<feature type="chain" id="PRO_0000296727" description="Adenine deaminase">
    <location>
        <begin position="1"/>
        <end position="579"/>
    </location>
</feature>
<dbReference type="EC" id="3.5.4.2" evidence="1"/>
<dbReference type="EMBL" id="AM263198">
    <property type="protein sequence ID" value="CAK21177.1"/>
    <property type="molecule type" value="Genomic_DNA"/>
</dbReference>
<dbReference type="RefSeq" id="WP_011702538.1">
    <property type="nucleotide sequence ID" value="NC_008555.1"/>
</dbReference>
<dbReference type="SMR" id="A0AJJ5"/>
<dbReference type="STRING" id="386043.lwe1759"/>
<dbReference type="GeneID" id="61189658"/>
<dbReference type="KEGG" id="lwe:lwe1759"/>
<dbReference type="eggNOG" id="COG1001">
    <property type="taxonomic scope" value="Bacteria"/>
</dbReference>
<dbReference type="HOGENOM" id="CLU_027935_0_0_9"/>
<dbReference type="OrthoDB" id="9775607at2"/>
<dbReference type="Proteomes" id="UP000000779">
    <property type="component" value="Chromosome"/>
</dbReference>
<dbReference type="GO" id="GO:0000034">
    <property type="term" value="F:adenine deaminase activity"/>
    <property type="evidence" value="ECO:0007669"/>
    <property type="project" value="UniProtKB-UniRule"/>
</dbReference>
<dbReference type="GO" id="GO:0006146">
    <property type="term" value="P:adenine catabolic process"/>
    <property type="evidence" value="ECO:0007669"/>
    <property type="project" value="InterPro"/>
</dbReference>
<dbReference type="CDD" id="cd01295">
    <property type="entry name" value="AdeC"/>
    <property type="match status" value="1"/>
</dbReference>
<dbReference type="FunFam" id="3.20.20.140:FF:000016">
    <property type="entry name" value="Adenine deaminase"/>
    <property type="match status" value="1"/>
</dbReference>
<dbReference type="Gene3D" id="3.20.20.140">
    <property type="entry name" value="Metal-dependent hydrolases"/>
    <property type="match status" value="1"/>
</dbReference>
<dbReference type="Gene3D" id="2.30.40.10">
    <property type="entry name" value="Urease, subunit C, domain 1"/>
    <property type="match status" value="1"/>
</dbReference>
<dbReference type="HAMAP" id="MF_01518">
    <property type="entry name" value="Adenine_deamin"/>
    <property type="match status" value="1"/>
</dbReference>
<dbReference type="InterPro" id="IPR006679">
    <property type="entry name" value="Adenine_deam"/>
</dbReference>
<dbReference type="InterPro" id="IPR026912">
    <property type="entry name" value="Adenine_deam_C"/>
</dbReference>
<dbReference type="InterPro" id="IPR006680">
    <property type="entry name" value="Amidohydro-rel"/>
</dbReference>
<dbReference type="InterPro" id="IPR011059">
    <property type="entry name" value="Metal-dep_hydrolase_composite"/>
</dbReference>
<dbReference type="InterPro" id="IPR032466">
    <property type="entry name" value="Metal_Hydrolase"/>
</dbReference>
<dbReference type="NCBIfam" id="TIGR01178">
    <property type="entry name" value="ade"/>
    <property type="match status" value="1"/>
</dbReference>
<dbReference type="PANTHER" id="PTHR11113:SF2">
    <property type="entry name" value="ADENINE DEAMINASE"/>
    <property type="match status" value="1"/>
</dbReference>
<dbReference type="PANTHER" id="PTHR11113">
    <property type="entry name" value="N-ACETYLGLUCOSAMINE-6-PHOSPHATE DEACETYLASE"/>
    <property type="match status" value="1"/>
</dbReference>
<dbReference type="Pfam" id="PF13382">
    <property type="entry name" value="Adenine_deam_C"/>
    <property type="match status" value="1"/>
</dbReference>
<dbReference type="Pfam" id="PF01979">
    <property type="entry name" value="Amidohydro_1"/>
    <property type="match status" value="1"/>
</dbReference>
<dbReference type="SUPFAM" id="SSF51338">
    <property type="entry name" value="Composite domain of metallo-dependent hydrolases"/>
    <property type="match status" value="1"/>
</dbReference>
<dbReference type="SUPFAM" id="SSF51556">
    <property type="entry name" value="Metallo-dependent hydrolases"/>
    <property type="match status" value="1"/>
</dbReference>
<gene>
    <name evidence="1" type="primary">ade</name>
    <name type="ordered locus">lwe1759</name>
</gene>
<protein>
    <recommendedName>
        <fullName evidence="1">Adenine deaminase</fullName>
        <shortName evidence="1">Adenase</shortName>
        <shortName evidence="1">Adenine aminase</shortName>
        <ecNumber evidence="1">3.5.4.2</ecNumber>
    </recommendedName>
</protein>
<accession>A0AJJ5</accession>
<evidence type="ECO:0000255" key="1">
    <source>
        <dbReference type="HAMAP-Rule" id="MF_01518"/>
    </source>
</evidence>
<name>ADEC_LISW6</name>